<name>ARNA_ERWT9</name>
<evidence type="ECO:0000255" key="1">
    <source>
        <dbReference type="HAMAP-Rule" id="MF_01166"/>
    </source>
</evidence>
<reference key="1">
    <citation type="journal article" date="2008" name="Environ. Microbiol.">
        <title>The genome of Erwinia tasmaniensis strain Et1/99, a non-pathogenic bacterium in the genus Erwinia.</title>
        <authorList>
            <person name="Kube M."/>
            <person name="Migdoll A.M."/>
            <person name="Mueller I."/>
            <person name="Kuhl H."/>
            <person name="Beck A."/>
            <person name="Reinhardt R."/>
            <person name="Geider K."/>
        </authorList>
    </citation>
    <scope>NUCLEOTIDE SEQUENCE [LARGE SCALE GENOMIC DNA]</scope>
    <source>
        <strain>DSM 17950 / CFBP 7177 / CIP 109463 / NCPPB 4357 / Et1/99</strain>
    </source>
</reference>
<accession>B2VBI9</accession>
<protein>
    <recommendedName>
        <fullName evidence="1">Bifunctional polymyxin resistance protein ArnA</fullName>
    </recommendedName>
    <domain>
        <recommendedName>
            <fullName evidence="1">UDP-4-amino-4-deoxy-L-arabinose formyltransferase</fullName>
            <ecNumber evidence="1">2.1.2.13</ecNumber>
        </recommendedName>
        <alternativeName>
            <fullName evidence="1">ArnAFT</fullName>
        </alternativeName>
        <alternativeName>
            <fullName evidence="1">UDP-L-Ara4N formyltransferase</fullName>
        </alternativeName>
    </domain>
    <domain>
        <recommendedName>
            <fullName evidence="1">UDP-glucuronic acid oxidase, UDP-4-keto-hexauronic acid decarboxylating</fullName>
            <ecNumber evidence="1">1.1.1.305</ecNumber>
        </recommendedName>
        <alternativeName>
            <fullName evidence="1">ArnADH</fullName>
        </alternativeName>
        <alternativeName>
            <fullName evidence="1">UDP-GlcUA decarboxylase</fullName>
        </alternativeName>
        <alternativeName>
            <fullName evidence="1">UDP-glucuronic acid dehydrogenase</fullName>
        </alternativeName>
    </domain>
</protein>
<dbReference type="EC" id="2.1.2.13" evidence="1"/>
<dbReference type="EC" id="1.1.1.305" evidence="1"/>
<dbReference type="EMBL" id="CU468135">
    <property type="protein sequence ID" value="CAO97427.1"/>
    <property type="molecule type" value="Genomic_DNA"/>
</dbReference>
<dbReference type="RefSeq" id="WP_012442095.1">
    <property type="nucleotide sequence ID" value="NC_010694.1"/>
</dbReference>
<dbReference type="SMR" id="B2VBI9"/>
<dbReference type="STRING" id="465817.ETA_23810"/>
<dbReference type="KEGG" id="eta:ETA_23810"/>
<dbReference type="eggNOG" id="COG0223">
    <property type="taxonomic scope" value="Bacteria"/>
</dbReference>
<dbReference type="eggNOG" id="COG0451">
    <property type="taxonomic scope" value="Bacteria"/>
</dbReference>
<dbReference type="HOGENOM" id="CLU_007383_23_2_6"/>
<dbReference type="OrthoDB" id="9802815at2"/>
<dbReference type="UniPathway" id="UPA00030"/>
<dbReference type="UniPathway" id="UPA00032">
    <property type="reaction ID" value="UER00492"/>
</dbReference>
<dbReference type="UniPathway" id="UPA00032">
    <property type="reaction ID" value="UER00494"/>
</dbReference>
<dbReference type="Proteomes" id="UP000001726">
    <property type="component" value="Chromosome"/>
</dbReference>
<dbReference type="GO" id="GO:0016020">
    <property type="term" value="C:membrane"/>
    <property type="evidence" value="ECO:0007669"/>
    <property type="project" value="GOC"/>
</dbReference>
<dbReference type="GO" id="GO:0016831">
    <property type="term" value="F:carboxy-lyase activity"/>
    <property type="evidence" value="ECO:0007669"/>
    <property type="project" value="InterPro"/>
</dbReference>
<dbReference type="GO" id="GO:0099619">
    <property type="term" value="F:UDP-4-amino-4-deoxy-L-arabinose formyltransferase activity"/>
    <property type="evidence" value="ECO:0007669"/>
    <property type="project" value="UniProtKB-EC"/>
</dbReference>
<dbReference type="GO" id="GO:0099618">
    <property type="term" value="F:UDP-glucuronate dehydrogenase activity"/>
    <property type="evidence" value="ECO:0007669"/>
    <property type="project" value="UniProtKB-EC"/>
</dbReference>
<dbReference type="GO" id="GO:0009245">
    <property type="term" value="P:lipid A biosynthetic process"/>
    <property type="evidence" value="ECO:0007669"/>
    <property type="project" value="UniProtKB-KW"/>
</dbReference>
<dbReference type="GO" id="GO:0009103">
    <property type="term" value="P:lipopolysaccharide biosynthetic process"/>
    <property type="evidence" value="ECO:0007669"/>
    <property type="project" value="UniProtKB-UniRule"/>
</dbReference>
<dbReference type="GO" id="GO:0046677">
    <property type="term" value="P:response to antibiotic"/>
    <property type="evidence" value="ECO:0007669"/>
    <property type="project" value="UniProtKB-KW"/>
</dbReference>
<dbReference type="CDD" id="cd08702">
    <property type="entry name" value="Arna_FMT_C"/>
    <property type="match status" value="1"/>
</dbReference>
<dbReference type="CDD" id="cd05257">
    <property type="entry name" value="Arna_like_SDR_e"/>
    <property type="match status" value="1"/>
</dbReference>
<dbReference type="FunFam" id="3.40.50.720:FF:000197">
    <property type="entry name" value="Bifunctional polymyxin resistance protein ArnA"/>
    <property type="match status" value="1"/>
</dbReference>
<dbReference type="Gene3D" id="3.40.50.12230">
    <property type="match status" value="1"/>
</dbReference>
<dbReference type="Gene3D" id="3.40.50.720">
    <property type="entry name" value="NAD(P)-binding Rossmann-like Domain"/>
    <property type="match status" value="1"/>
</dbReference>
<dbReference type="HAMAP" id="MF_01166">
    <property type="entry name" value="ArnA"/>
    <property type="match status" value="1"/>
</dbReference>
<dbReference type="InterPro" id="IPR045869">
    <property type="entry name" value="Arna-like_SDR_e"/>
</dbReference>
<dbReference type="InterPro" id="IPR021168">
    <property type="entry name" value="Bifun_polymyxin_resist_ArnA"/>
</dbReference>
<dbReference type="InterPro" id="IPR001509">
    <property type="entry name" value="Epimerase_deHydtase"/>
</dbReference>
<dbReference type="InterPro" id="IPR005793">
    <property type="entry name" value="Formyl_trans_C"/>
</dbReference>
<dbReference type="InterPro" id="IPR002376">
    <property type="entry name" value="Formyl_transf_N"/>
</dbReference>
<dbReference type="InterPro" id="IPR036477">
    <property type="entry name" value="Formyl_transf_N_sf"/>
</dbReference>
<dbReference type="InterPro" id="IPR011034">
    <property type="entry name" value="Formyl_transferase-like_C_sf"/>
</dbReference>
<dbReference type="InterPro" id="IPR050177">
    <property type="entry name" value="Lipid_A_modif_metabolic_enz"/>
</dbReference>
<dbReference type="InterPro" id="IPR036291">
    <property type="entry name" value="NAD(P)-bd_dom_sf"/>
</dbReference>
<dbReference type="NCBIfam" id="NF005414">
    <property type="entry name" value="PRK06988.1"/>
    <property type="match status" value="1"/>
</dbReference>
<dbReference type="NCBIfam" id="NF005998">
    <property type="entry name" value="PRK08125.1"/>
    <property type="match status" value="1"/>
</dbReference>
<dbReference type="NCBIfam" id="NF008872">
    <property type="entry name" value="PRK11908.1"/>
    <property type="match status" value="1"/>
</dbReference>
<dbReference type="PANTHER" id="PTHR43245">
    <property type="entry name" value="BIFUNCTIONAL POLYMYXIN RESISTANCE PROTEIN ARNA"/>
    <property type="match status" value="1"/>
</dbReference>
<dbReference type="PANTHER" id="PTHR43245:SF13">
    <property type="entry name" value="UDP-D-APIOSE_UDP-D-XYLOSE SYNTHASE 2"/>
    <property type="match status" value="1"/>
</dbReference>
<dbReference type="Pfam" id="PF01370">
    <property type="entry name" value="Epimerase"/>
    <property type="match status" value="1"/>
</dbReference>
<dbReference type="Pfam" id="PF02911">
    <property type="entry name" value="Formyl_trans_C"/>
    <property type="match status" value="1"/>
</dbReference>
<dbReference type="Pfam" id="PF00551">
    <property type="entry name" value="Formyl_trans_N"/>
    <property type="match status" value="1"/>
</dbReference>
<dbReference type="PIRSF" id="PIRSF036506">
    <property type="entry name" value="Bifun_polymyxin_resist_ArnA"/>
    <property type="match status" value="1"/>
</dbReference>
<dbReference type="SUPFAM" id="SSF50486">
    <property type="entry name" value="FMT C-terminal domain-like"/>
    <property type="match status" value="1"/>
</dbReference>
<dbReference type="SUPFAM" id="SSF53328">
    <property type="entry name" value="Formyltransferase"/>
    <property type="match status" value="1"/>
</dbReference>
<dbReference type="SUPFAM" id="SSF51735">
    <property type="entry name" value="NAD(P)-binding Rossmann-fold domains"/>
    <property type="match status" value="1"/>
</dbReference>
<sequence length="660" mass="73727">MKAVVFAYHDIGCTGIRALAEAGYEIAAIFTHADNAAENHFFASVARTAAELGVPVYAPEDANHPLWVDRIRGMKPDAIFSFHYRHMLNDDIINSASLGAFNLHASLLPKYRGRAPLNWVLVNGEQETGVTLHRMVKRADAGAIIAQNTVAIADRDDALTLHRKVCAAAGELLAEALPAIKIGEFSEHQQDESQASYVGRRTPEDGRIDWHLPAQRVYNLVRAVTDPWPGAFGYVGTGKFIVWQSKIHYDRAAAKPGTVLSVAPFVVACAEGALEIVTGQSESGVYMQGSQLAQTLGLVAGARLYNHPAAVAKRRTRVLILGVNGFIGNHLTERLLVDDNFEVFGLDIGSDAIGRFIGHERFHFVEGDISIHSEWIEYHIKKCDVVLPLVAIATPIEYTRNPLRVFELDFEENLKIIRDCVKYKKRIIFPSTSEVYGMCTDASFDEDSSNLVVGPINKQRWIYSVSKQLLDRVIWAYGDKEGLRFTLFRPFNWMGPRLDNLNAARIGSSRAITQLILNLVEGSPIKLIDGGRQKRCFTDIHDGIEALFLIIENKQKNCDGQIINIGNPENEASIKQLAEQLLESFERHPLRDRFPPFAGFREVESSTYYGKGYQDVEHRKPSIRNAKQLLNWQPTIAMDKTIDDTLDFFLQSVEPGDAEE</sequence>
<keyword id="KW-0046">Antibiotic resistance</keyword>
<keyword id="KW-0441">Lipid A biosynthesis</keyword>
<keyword id="KW-0444">Lipid biosynthesis</keyword>
<keyword id="KW-0443">Lipid metabolism</keyword>
<keyword id="KW-0448">Lipopolysaccharide biosynthesis</keyword>
<keyword id="KW-0511">Multifunctional enzyme</keyword>
<keyword id="KW-0520">NAD</keyword>
<keyword id="KW-0560">Oxidoreductase</keyword>
<keyword id="KW-1185">Reference proteome</keyword>
<keyword id="KW-0808">Transferase</keyword>
<gene>
    <name evidence="1" type="primary">arnA</name>
    <name type="ordered locus">ETA_23810</name>
</gene>
<comment type="function">
    <text evidence="1">Bifunctional enzyme that catalyzes the oxidative decarboxylation of UDP-glucuronic acid (UDP-GlcUA) to UDP-4-keto-arabinose (UDP-Ara4O) and the addition of a formyl group to UDP-4-amino-4-deoxy-L-arabinose (UDP-L-Ara4N) to form UDP-L-4-formamido-arabinose (UDP-L-Ara4FN). The modified arabinose is attached to lipid A and is required for resistance to polymyxin and cationic antimicrobial peptides.</text>
</comment>
<comment type="catalytic activity">
    <reaction evidence="1">
        <text>UDP-alpha-D-glucuronate + NAD(+) = UDP-beta-L-threo-pentopyranos-4-ulose + CO2 + NADH</text>
        <dbReference type="Rhea" id="RHEA:24702"/>
        <dbReference type="ChEBI" id="CHEBI:16526"/>
        <dbReference type="ChEBI" id="CHEBI:57540"/>
        <dbReference type="ChEBI" id="CHEBI:57945"/>
        <dbReference type="ChEBI" id="CHEBI:58052"/>
        <dbReference type="ChEBI" id="CHEBI:58710"/>
        <dbReference type="EC" id="1.1.1.305"/>
    </reaction>
</comment>
<comment type="catalytic activity">
    <reaction evidence="1">
        <text>UDP-4-amino-4-deoxy-beta-L-arabinose + (6R)-10-formyltetrahydrofolate = UDP-4-deoxy-4-formamido-beta-L-arabinose + (6S)-5,6,7,8-tetrahydrofolate + H(+)</text>
        <dbReference type="Rhea" id="RHEA:24706"/>
        <dbReference type="ChEBI" id="CHEBI:15378"/>
        <dbReference type="ChEBI" id="CHEBI:57453"/>
        <dbReference type="ChEBI" id="CHEBI:58708"/>
        <dbReference type="ChEBI" id="CHEBI:58709"/>
        <dbReference type="ChEBI" id="CHEBI:195366"/>
        <dbReference type="EC" id="2.1.2.13"/>
    </reaction>
</comment>
<comment type="pathway">
    <text evidence="1">Nucleotide-sugar biosynthesis; UDP-4-deoxy-4-formamido-beta-L-arabinose biosynthesis; UDP-4-deoxy-4-formamido-beta-L-arabinose from UDP-alpha-D-glucuronate: step 1/3.</text>
</comment>
<comment type="pathway">
    <text evidence="1">Nucleotide-sugar biosynthesis; UDP-4-deoxy-4-formamido-beta-L-arabinose biosynthesis; UDP-4-deoxy-4-formamido-beta-L-arabinose from UDP-alpha-D-glucuronate: step 3/3.</text>
</comment>
<comment type="pathway">
    <text evidence="1">Bacterial outer membrane biogenesis; lipopolysaccharide biosynthesis.</text>
</comment>
<comment type="subunit">
    <text evidence="1">Homohexamer, formed by a dimer of trimers.</text>
</comment>
<comment type="similarity">
    <text evidence="1">In the N-terminal section; belongs to the Fmt family. UDP-L-Ara4N formyltransferase subfamily.</text>
</comment>
<comment type="similarity">
    <text evidence="1">In the C-terminal section; belongs to the NAD(P)-dependent epimerase/dehydratase family. UDP-glucuronic acid decarboxylase subfamily.</text>
</comment>
<organism>
    <name type="scientific">Erwinia tasmaniensis (strain DSM 17950 / CFBP 7177 / CIP 109463 / NCPPB 4357 / Et1/99)</name>
    <dbReference type="NCBI Taxonomy" id="465817"/>
    <lineage>
        <taxon>Bacteria</taxon>
        <taxon>Pseudomonadati</taxon>
        <taxon>Pseudomonadota</taxon>
        <taxon>Gammaproteobacteria</taxon>
        <taxon>Enterobacterales</taxon>
        <taxon>Erwiniaceae</taxon>
        <taxon>Erwinia</taxon>
    </lineage>
</organism>
<proteinExistence type="inferred from homology"/>
<feature type="chain" id="PRO_1000137941" description="Bifunctional polymyxin resistance protein ArnA">
    <location>
        <begin position="1"/>
        <end position="660"/>
    </location>
</feature>
<feature type="region of interest" description="Formyltransferase ArnAFT">
    <location>
        <begin position="1"/>
        <end position="304"/>
    </location>
</feature>
<feature type="region of interest" description="Dehydrogenase ArnADH">
    <location>
        <begin position="314"/>
        <end position="660"/>
    </location>
</feature>
<feature type="active site" description="Proton donor; for formyltransferase activity" evidence="1">
    <location>
        <position position="104"/>
    </location>
</feature>
<feature type="active site" description="Proton acceptor; for decarboxylase activity" evidence="1">
    <location>
        <position position="434"/>
    </location>
</feature>
<feature type="active site" description="Proton donor; for decarboxylase activity" evidence="1">
    <location>
        <position position="619"/>
    </location>
</feature>
<feature type="binding site" evidence="1">
    <location>
        <position position="114"/>
    </location>
    <ligand>
        <name>(6R)-10-formyltetrahydrofolate</name>
        <dbReference type="ChEBI" id="CHEBI:195366"/>
    </ligand>
</feature>
<feature type="binding site" evidence="1">
    <location>
        <begin position="136"/>
        <end position="140"/>
    </location>
    <ligand>
        <name>(6R)-10-formyltetrahydrofolate</name>
        <dbReference type="ChEBI" id="CHEBI:195366"/>
    </ligand>
</feature>
<feature type="binding site" evidence="1">
    <location>
        <position position="347"/>
    </location>
    <ligand>
        <name>NAD(+)</name>
        <dbReference type="ChEBI" id="CHEBI:57540"/>
    </ligand>
</feature>
<feature type="binding site" evidence="1">
    <location>
        <begin position="368"/>
        <end position="369"/>
    </location>
    <ligand>
        <name>NAD(+)</name>
        <dbReference type="ChEBI" id="CHEBI:57540"/>
    </ligand>
</feature>
<feature type="binding site" evidence="1">
    <location>
        <position position="393"/>
    </location>
    <ligand>
        <name>UDP-alpha-D-glucuronate</name>
        <dbReference type="ChEBI" id="CHEBI:58052"/>
    </ligand>
</feature>
<feature type="binding site" evidence="1">
    <location>
        <position position="398"/>
    </location>
    <ligand>
        <name>UDP-alpha-D-glucuronate</name>
        <dbReference type="ChEBI" id="CHEBI:58052"/>
    </ligand>
</feature>
<feature type="binding site" evidence="1">
    <location>
        <begin position="432"/>
        <end position="433"/>
    </location>
    <ligand>
        <name>UDP-alpha-D-glucuronate</name>
        <dbReference type="ChEBI" id="CHEBI:58052"/>
    </ligand>
</feature>
<feature type="binding site" evidence="1">
    <location>
        <position position="460"/>
    </location>
    <ligand>
        <name>UDP-alpha-D-glucuronate</name>
        <dbReference type="ChEBI" id="CHEBI:58052"/>
    </ligand>
</feature>
<feature type="binding site" evidence="1">
    <location>
        <position position="492"/>
    </location>
    <ligand>
        <name>UDP-alpha-D-glucuronate</name>
        <dbReference type="ChEBI" id="CHEBI:58052"/>
    </ligand>
</feature>
<feature type="binding site" evidence="1">
    <location>
        <begin position="526"/>
        <end position="535"/>
    </location>
    <ligand>
        <name>UDP-alpha-D-glucuronate</name>
        <dbReference type="ChEBI" id="CHEBI:58052"/>
    </ligand>
</feature>
<feature type="binding site" evidence="1">
    <location>
        <position position="613"/>
    </location>
    <ligand>
        <name>UDP-alpha-D-glucuronate</name>
        <dbReference type="ChEBI" id="CHEBI:58052"/>
    </ligand>
</feature>
<feature type="site" description="Transition state stabilizer" evidence="1">
    <location>
        <position position="102"/>
    </location>
</feature>
<feature type="site" description="Raises pKa of active site His" evidence="1">
    <location>
        <position position="140"/>
    </location>
</feature>